<sequence>MTEHKSGFVSIIGRPNVGKSTFVNRVIGHKIAIMSDKAQTTRNKIQGVMTRDDAQIIFIDTPGIHKPKHKLGDYMMKVAKNTLSEIDAIMFMVNANEEIGRGDEYIIEMLKNVKTPVFLVLNKIDLVHPDELMPKIEEYQSYMDFTEIVPISALEGLNVDHFIDVLKTYLPEGPKYYPDDQISDHPEQFVVGEIIREKILHLTSEEIPHAIGVNVDRMVKESEDRVHIEATIYVERDSQKGIVIGKGGKKLKEVGKRARRDIEMLLGSKVYLELWVKVQRDWRNKVNFIRQIGYVEDQD</sequence>
<keyword id="KW-1003">Cell membrane</keyword>
<keyword id="KW-0963">Cytoplasm</keyword>
<keyword id="KW-0342">GTP-binding</keyword>
<keyword id="KW-0472">Membrane</keyword>
<keyword id="KW-0547">Nucleotide-binding</keyword>
<keyword id="KW-0690">Ribosome biogenesis</keyword>
<keyword id="KW-0694">RNA-binding</keyword>
<keyword id="KW-0699">rRNA-binding</keyword>
<evidence type="ECO:0000255" key="1">
    <source>
        <dbReference type="HAMAP-Rule" id="MF_00367"/>
    </source>
</evidence>
<evidence type="ECO:0000255" key="2">
    <source>
        <dbReference type="PROSITE-ProRule" id="PRU01050"/>
    </source>
</evidence>
<protein>
    <recommendedName>
        <fullName evidence="1">GTPase Era</fullName>
    </recommendedName>
</protein>
<gene>
    <name evidence="1" type="primary">era</name>
    <name type="synonym">bex</name>
    <name type="ordered locus">SA1396</name>
</gene>
<organism>
    <name type="scientific">Staphylococcus aureus (strain N315)</name>
    <dbReference type="NCBI Taxonomy" id="158879"/>
    <lineage>
        <taxon>Bacteria</taxon>
        <taxon>Bacillati</taxon>
        <taxon>Bacillota</taxon>
        <taxon>Bacilli</taxon>
        <taxon>Bacillales</taxon>
        <taxon>Staphylococcaceae</taxon>
        <taxon>Staphylococcus</taxon>
    </lineage>
</organism>
<comment type="function">
    <text evidence="1">An essential GTPase that binds both GDP and GTP, with rapid nucleotide exchange. Plays a role in 16S rRNA processing and 30S ribosomal subunit biogenesis and possibly also in cell cycle regulation and energy metabolism.</text>
</comment>
<comment type="subunit">
    <text evidence="1">Monomer.</text>
</comment>
<comment type="subcellular location">
    <subcellularLocation>
        <location>Cytoplasm</location>
    </subcellularLocation>
    <subcellularLocation>
        <location evidence="1">Cell membrane</location>
        <topology evidence="1">Peripheral membrane protein</topology>
    </subcellularLocation>
</comment>
<comment type="similarity">
    <text evidence="1 2">Belongs to the TRAFAC class TrmE-Era-EngA-EngB-Septin-like GTPase superfamily. Era GTPase family.</text>
</comment>
<name>ERA_STAAN</name>
<feature type="chain" id="PRO_0000180048" description="GTPase Era">
    <location>
        <begin position="1"/>
        <end position="299"/>
    </location>
</feature>
<feature type="domain" description="Era-type G" evidence="2">
    <location>
        <begin position="5"/>
        <end position="172"/>
    </location>
</feature>
<feature type="domain" description="KH type-2" evidence="1">
    <location>
        <begin position="203"/>
        <end position="280"/>
    </location>
</feature>
<feature type="region of interest" description="G1" evidence="2">
    <location>
        <begin position="13"/>
        <end position="20"/>
    </location>
</feature>
<feature type="region of interest" description="G2" evidence="2">
    <location>
        <begin position="39"/>
        <end position="43"/>
    </location>
</feature>
<feature type="region of interest" description="G3" evidence="2">
    <location>
        <begin position="60"/>
        <end position="63"/>
    </location>
</feature>
<feature type="region of interest" description="G4" evidence="2">
    <location>
        <begin position="122"/>
        <end position="125"/>
    </location>
</feature>
<feature type="region of interest" description="G5" evidence="2">
    <location>
        <begin position="151"/>
        <end position="153"/>
    </location>
</feature>
<feature type="binding site" evidence="1">
    <location>
        <begin position="13"/>
        <end position="20"/>
    </location>
    <ligand>
        <name>GTP</name>
        <dbReference type="ChEBI" id="CHEBI:37565"/>
    </ligand>
</feature>
<feature type="binding site" evidence="1">
    <location>
        <begin position="60"/>
        <end position="64"/>
    </location>
    <ligand>
        <name>GTP</name>
        <dbReference type="ChEBI" id="CHEBI:37565"/>
    </ligand>
</feature>
<feature type="binding site" evidence="1">
    <location>
        <begin position="122"/>
        <end position="125"/>
    </location>
    <ligand>
        <name>GTP</name>
        <dbReference type="ChEBI" id="CHEBI:37565"/>
    </ligand>
</feature>
<dbReference type="EMBL" id="BA000018">
    <property type="protein sequence ID" value="BAB42659.1"/>
    <property type="molecule type" value="Genomic_DNA"/>
</dbReference>
<dbReference type="PIR" id="F89937">
    <property type="entry name" value="F89937"/>
</dbReference>
<dbReference type="RefSeq" id="WP_000134765.1">
    <property type="nucleotide sequence ID" value="NC_002745.2"/>
</dbReference>
<dbReference type="SMR" id="P64085"/>
<dbReference type="EnsemblBacteria" id="BAB42659">
    <property type="protein sequence ID" value="BAB42659"/>
    <property type="gene ID" value="BAB42659"/>
</dbReference>
<dbReference type="KEGG" id="sau:SA1396"/>
<dbReference type="HOGENOM" id="CLU_038009_1_0_9"/>
<dbReference type="GO" id="GO:0005829">
    <property type="term" value="C:cytosol"/>
    <property type="evidence" value="ECO:0007669"/>
    <property type="project" value="TreeGrafter"/>
</dbReference>
<dbReference type="GO" id="GO:0005886">
    <property type="term" value="C:plasma membrane"/>
    <property type="evidence" value="ECO:0007669"/>
    <property type="project" value="UniProtKB-SubCell"/>
</dbReference>
<dbReference type="GO" id="GO:0005525">
    <property type="term" value="F:GTP binding"/>
    <property type="evidence" value="ECO:0007669"/>
    <property type="project" value="UniProtKB-UniRule"/>
</dbReference>
<dbReference type="GO" id="GO:0003924">
    <property type="term" value="F:GTPase activity"/>
    <property type="evidence" value="ECO:0007669"/>
    <property type="project" value="UniProtKB-UniRule"/>
</dbReference>
<dbReference type="GO" id="GO:0043024">
    <property type="term" value="F:ribosomal small subunit binding"/>
    <property type="evidence" value="ECO:0007669"/>
    <property type="project" value="TreeGrafter"/>
</dbReference>
<dbReference type="GO" id="GO:0070181">
    <property type="term" value="F:small ribosomal subunit rRNA binding"/>
    <property type="evidence" value="ECO:0007669"/>
    <property type="project" value="UniProtKB-UniRule"/>
</dbReference>
<dbReference type="GO" id="GO:0000028">
    <property type="term" value="P:ribosomal small subunit assembly"/>
    <property type="evidence" value="ECO:0007669"/>
    <property type="project" value="TreeGrafter"/>
</dbReference>
<dbReference type="CDD" id="cd04163">
    <property type="entry name" value="Era"/>
    <property type="match status" value="1"/>
</dbReference>
<dbReference type="CDD" id="cd22534">
    <property type="entry name" value="KH-II_Era"/>
    <property type="match status" value="1"/>
</dbReference>
<dbReference type="FunFam" id="3.30.300.20:FF:000003">
    <property type="entry name" value="GTPase Era"/>
    <property type="match status" value="1"/>
</dbReference>
<dbReference type="FunFam" id="3.40.50.300:FF:000094">
    <property type="entry name" value="GTPase Era"/>
    <property type="match status" value="1"/>
</dbReference>
<dbReference type="Gene3D" id="3.30.300.20">
    <property type="match status" value="1"/>
</dbReference>
<dbReference type="Gene3D" id="3.40.50.300">
    <property type="entry name" value="P-loop containing nucleotide triphosphate hydrolases"/>
    <property type="match status" value="1"/>
</dbReference>
<dbReference type="HAMAP" id="MF_00367">
    <property type="entry name" value="GTPase_Era"/>
    <property type="match status" value="1"/>
</dbReference>
<dbReference type="InterPro" id="IPR030388">
    <property type="entry name" value="G_ERA_dom"/>
</dbReference>
<dbReference type="InterPro" id="IPR006073">
    <property type="entry name" value="GTP-bd"/>
</dbReference>
<dbReference type="InterPro" id="IPR005662">
    <property type="entry name" value="GTPase_Era-like"/>
</dbReference>
<dbReference type="InterPro" id="IPR015946">
    <property type="entry name" value="KH_dom-like_a/b"/>
</dbReference>
<dbReference type="InterPro" id="IPR004044">
    <property type="entry name" value="KH_dom_type_2"/>
</dbReference>
<dbReference type="InterPro" id="IPR009019">
    <property type="entry name" value="KH_sf_prok-type"/>
</dbReference>
<dbReference type="InterPro" id="IPR027417">
    <property type="entry name" value="P-loop_NTPase"/>
</dbReference>
<dbReference type="InterPro" id="IPR005225">
    <property type="entry name" value="Small_GTP-bd"/>
</dbReference>
<dbReference type="NCBIfam" id="TIGR00436">
    <property type="entry name" value="era"/>
    <property type="match status" value="1"/>
</dbReference>
<dbReference type="NCBIfam" id="NF000908">
    <property type="entry name" value="PRK00089.1"/>
    <property type="match status" value="1"/>
</dbReference>
<dbReference type="NCBIfam" id="TIGR00231">
    <property type="entry name" value="small_GTP"/>
    <property type="match status" value="1"/>
</dbReference>
<dbReference type="PANTHER" id="PTHR42698">
    <property type="entry name" value="GTPASE ERA"/>
    <property type="match status" value="1"/>
</dbReference>
<dbReference type="PANTHER" id="PTHR42698:SF1">
    <property type="entry name" value="GTPASE ERA, MITOCHONDRIAL"/>
    <property type="match status" value="1"/>
</dbReference>
<dbReference type="Pfam" id="PF07650">
    <property type="entry name" value="KH_2"/>
    <property type="match status" value="1"/>
</dbReference>
<dbReference type="Pfam" id="PF01926">
    <property type="entry name" value="MMR_HSR1"/>
    <property type="match status" value="1"/>
</dbReference>
<dbReference type="SUPFAM" id="SSF52540">
    <property type="entry name" value="P-loop containing nucleoside triphosphate hydrolases"/>
    <property type="match status" value="1"/>
</dbReference>
<dbReference type="SUPFAM" id="SSF54814">
    <property type="entry name" value="Prokaryotic type KH domain (KH-domain type II)"/>
    <property type="match status" value="1"/>
</dbReference>
<dbReference type="PROSITE" id="PS51713">
    <property type="entry name" value="G_ERA"/>
    <property type="match status" value="1"/>
</dbReference>
<dbReference type="PROSITE" id="PS50823">
    <property type="entry name" value="KH_TYPE_2"/>
    <property type="match status" value="1"/>
</dbReference>
<reference key="1">
    <citation type="journal article" date="2001" name="Lancet">
        <title>Whole genome sequencing of meticillin-resistant Staphylococcus aureus.</title>
        <authorList>
            <person name="Kuroda M."/>
            <person name="Ohta T."/>
            <person name="Uchiyama I."/>
            <person name="Baba T."/>
            <person name="Yuzawa H."/>
            <person name="Kobayashi I."/>
            <person name="Cui L."/>
            <person name="Oguchi A."/>
            <person name="Aoki K."/>
            <person name="Nagai Y."/>
            <person name="Lian J.-Q."/>
            <person name="Ito T."/>
            <person name="Kanamori M."/>
            <person name="Matsumaru H."/>
            <person name="Maruyama A."/>
            <person name="Murakami H."/>
            <person name="Hosoyama A."/>
            <person name="Mizutani-Ui Y."/>
            <person name="Takahashi N.K."/>
            <person name="Sawano T."/>
            <person name="Inoue R."/>
            <person name="Kaito C."/>
            <person name="Sekimizu K."/>
            <person name="Hirakawa H."/>
            <person name="Kuhara S."/>
            <person name="Goto S."/>
            <person name="Yabuzaki J."/>
            <person name="Kanehisa M."/>
            <person name="Yamashita A."/>
            <person name="Oshima K."/>
            <person name="Furuya K."/>
            <person name="Yoshino C."/>
            <person name="Shiba T."/>
            <person name="Hattori M."/>
            <person name="Ogasawara N."/>
            <person name="Hayashi H."/>
            <person name="Hiramatsu K."/>
        </authorList>
    </citation>
    <scope>NUCLEOTIDE SEQUENCE [LARGE SCALE GENOMIC DNA]</scope>
    <source>
        <strain>N315</strain>
    </source>
</reference>
<reference key="2">
    <citation type="submission" date="2007-10" db="UniProtKB">
        <title>Shotgun proteomic analysis of total and membrane protein extracts of S. aureus strain N315.</title>
        <authorList>
            <person name="Vaezzadeh A.R."/>
            <person name="Deshusses J."/>
            <person name="Lescuyer P."/>
            <person name="Hochstrasser D.F."/>
        </authorList>
    </citation>
    <scope>IDENTIFICATION BY MASS SPECTROMETRY [LARGE SCALE ANALYSIS]</scope>
    <source>
        <strain>N315</strain>
    </source>
</reference>
<accession>P64085</accession>
<accession>Q99TS9</accession>
<proteinExistence type="evidence at protein level"/>